<sequence length="101" mass="11973">MRRYEVNIVLNPNLDQSQLALEKEIIQRALENYGARVEKVEELGLRRLAYPIAKDPQGYFLWYQVEMPEDRVNDLARELRIRDNVRRVMVVKSQEPFLANA</sequence>
<name>RS6_THET2</name>
<gene>
    <name type="primary">rpsF</name>
    <name type="synonym">rps6</name>
    <name type="ordered locus">TT_C1740</name>
</gene>
<evidence type="ECO:0000250" key="1"/>
<evidence type="ECO:0000305" key="2"/>
<evidence type="ECO:0007829" key="3">
    <source>
        <dbReference type="PDB" id="4V63"/>
    </source>
</evidence>
<evidence type="ECO:0007829" key="4">
    <source>
        <dbReference type="PDB" id="4V67"/>
    </source>
</evidence>
<evidence type="ECO:0007829" key="5">
    <source>
        <dbReference type="PDB" id="4V9K"/>
    </source>
</evidence>
<dbReference type="EMBL" id="AE017221">
    <property type="protein sequence ID" value="AAS82082.1"/>
    <property type="molecule type" value="Genomic_DNA"/>
</dbReference>
<dbReference type="RefSeq" id="WP_011174099.1">
    <property type="nucleotide sequence ID" value="NC_005835.1"/>
</dbReference>
<dbReference type="PDB" id="4KVB">
    <property type="method" value="X-ray"/>
    <property type="resolution" value="4.20 A"/>
    <property type="chains" value="F=1-101"/>
</dbReference>
<dbReference type="PDB" id="4V4I">
    <property type="method" value="X-ray"/>
    <property type="resolution" value="3.71 A"/>
    <property type="chains" value="g=1-101"/>
</dbReference>
<dbReference type="PDB" id="4V4J">
    <property type="method" value="X-ray"/>
    <property type="resolution" value="3.83 A"/>
    <property type="chains" value="g=1-101"/>
</dbReference>
<dbReference type="PDB" id="4V63">
    <property type="method" value="X-ray"/>
    <property type="resolution" value="3.21 A"/>
    <property type="chains" value="AF/CF=1-101"/>
</dbReference>
<dbReference type="PDB" id="4V67">
    <property type="method" value="X-ray"/>
    <property type="resolution" value="3.00 A"/>
    <property type="chains" value="AF/CF=1-101"/>
</dbReference>
<dbReference type="PDB" id="4V7P">
    <property type="method" value="X-ray"/>
    <property type="resolution" value="3.62 A"/>
    <property type="chains" value="AF/DF=1-101"/>
</dbReference>
<dbReference type="PDB" id="4V83">
    <property type="method" value="X-ray"/>
    <property type="resolution" value="3.50 A"/>
    <property type="chains" value="AF/CF=1-101"/>
</dbReference>
<dbReference type="PDB" id="4V84">
    <property type="method" value="X-ray"/>
    <property type="resolution" value="3.40 A"/>
    <property type="chains" value="AF/CF=1-101"/>
</dbReference>
<dbReference type="PDB" id="4V9J">
    <property type="method" value="X-ray"/>
    <property type="resolution" value="3.86 A"/>
    <property type="chains" value="AF/CF=1-101"/>
</dbReference>
<dbReference type="PDB" id="4V9K">
    <property type="method" value="X-ray"/>
    <property type="resolution" value="3.50 A"/>
    <property type="chains" value="AF/CF=1-101"/>
</dbReference>
<dbReference type="PDB" id="4V9L">
    <property type="method" value="X-ray"/>
    <property type="resolution" value="3.50 A"/>
    <property type="chains" value="AF/CF=1-101"/>
</dbReference>
<dbReference type="PDB" id="4V9M">
    <property type="method" value="X-ray"/>
    <property type="resolution" value="4.00 A"/>
    <property type="chains" value="AF/CF=1-101"/>
</dbReference>
<dbReference type="PDB" id="4V9N">
    <property type="method" value="X-ray"/>
    <property type="resolution" value="3.40 A"/>
    <property type="chains" value="AF/CF=1-101"/>
</dbReference>
<dbReference type="PDB" id="4V9Q">
    <property type="method" value="X-ray"/>
    <property type="resolution" value="3.40 A"/>
    <property type="chains" value="BF/DF=1-101"/>
</dbReference>
<dbReference type="PDB" id="4W29">
    <property type="method" value="X-ray"/>
    <property type="resolution" value="3.80 A"/>
    <property type="chains" value="AF/CF=1-101"/>
</dbReference>
<dbReference type="PDB" id="4XEJ">
    <property type="method" value="X-ray"/>
    <property type="resolution" value="3.80 A"/>
    <property type="chains" value="AS06/BS06=1-101"/>
</dbReference>
<dbReference type="PDB" id="5J4D">
    <property type="method" value="X-ray"/>
    <property type="resolution" value="3.10 A"/>
    <property type="chains" value="OA/TC=1-101"/>
</dbReference>
<dbReference type="PDB" id="5V8I">
    <property type="method" value="X-ray"/>
    <property type="resolution" value="3.25 A"/>
    <property type="chains" value="1f/2f=1-101"/>
</dbReference>
<dbReference type="PDB" id="6B4V">
    <property type="method" value="X-ray"/>
    <property type="resolution" value="3.40 A"/>
    <property type="chains" value="OA/SC=1-101"/>
</dbReference>
<dbReference type="PDB" id="6BOH">
    <property type="method" value="X-ray"/>
    <property type="resolution" value="3.40 A"/>
    <property type="chains" value="PA/UC=1-101"/>
</dbReference>
<dbReference type="PDB" id="6BOK">
    <property type="method" value="X-ray"/>
    <property type="resolution" value="3.55 A"/>
    <property type="chains" value="NA/QC=1-101"/>
</dbReference>
<dbReference type="PDB" id="6N1D">
    <property type="method" value="X-ray"/>
    <property type="resolution" value="3.20 A"/>
    <property type="chains" value="AS06/BS06=1-101"/>
</dbReference>
<dbReference type="PDBsum" id="4KVB"/>
<dbReference type="PDBsum" id="4V4I"/>
<dbReference type="PDBsum" id="4V4J"/>
<dbReference type="PDBsum" id="4V63"/>
<dbReference type="PDBsum" id="4V67"/>
<dbReference type="PDBsum" id="4V7P"/>
<dbReference type="PDBsum" id="4V83"/>
<dbReference type="PDBsum" id="4V84"/>
<dbReference type="PDBsum" id="4V9J"/>
<dbReference type="PDBsum" id="4V9K"/>
<dbReference type="PDBsum" id="4V9L"/>
<dbReference type="PDBsum" id="4V9M"/>
<dbReference type="PDBsum" id="4V9N"/>
<dbReference type="PDBsum" id="4V9Q"/>
<dbReference type="PDBsum" id="4W29"/>
<dbReference type="PDBsum" id="4XEJ"/>
<dbReference type="PDBsum" id="5J4D"/>
<dbReference type="PDBsum" id="5V8I"/>
<dbReference type="PDBsum" id="6B4V"/>
<dbReference type="PDBsum" id="6BOH"/>
<dbReference type="PDBsum" id="6BOK"/>
<dbReference type="PDBsum" id="6N1D"/>
<dbReference type="BMRB" id="P62666"/>
<dbReference type="SMR" id="P62666"/>
<dbReference type="IntAct" id="P62666">
    <property type="interactions" value="4"/>
</dbReference>
<dbReference type="GeneID" id="3168355"/>
<dbReference type="KEGG" id="tth:TT_C1740"/>
<dbReference type="eggNOG" id="COG0360">
    <property type="taxonomic scope" value="Bacteria"/>
</dbReference>
<dbReference type="HOGENOM" id="CLU_113441_5_3_0"/>
<dbReference type="OrthoDB" id="9812702at2"/>
<dbReference type="EvolutionaryTrace" id="P62666"/>
<dbReference type="Proteomes" id="UP000000592">
    <property type="component" value="Chromosome"/>
</dbReference>
<dbReference type="GO" id="GO:0005737">
    <property type="term" value="C:cytoplasm"/>
    <property type="evidence" value="ECO:0007669"/>
    <property type="project" value="UniProtKB-ARBA"/>
</dbReference>
<dbReference type="GO" id="GO:1990904">
    <property type="term" value="C:ribonucleoprotein complex"/>
    <property type="evidence" value="ECO:0007669"/>
    <property type="project" value="UniProtKB-KW"/>
</dbReference>
<dbReference type="GO" id="GO:0005840">
    <property type="term" value="C:ribosome"/>
    <property type="evidence" value="ECO:0007669"/>
    <property type="project" value="UniProtKB-KW"/>
</dbReference>
<dbReference type="GO" id="GO:0070181">
    <property type="term" value="F:small ribosomal subunit rRNA binding"/>
    <property type="evidence" value="ECO:0007669"/>
    <property type="project" value="TreeGrafter"/>
</dbReference>
<dbReference type="GO" id="GO:0003735">
    <property type="term" value="F:structural constituent of ribosome"/>
    <property type="evidence" value="ECO:0007669"/>
    <property type="project" value="InterPro"/>
</dbReference>
<dbReference type="GO" id="GO:0006412">
    <property type="term" value="P:translation"/>
    <property type="evidence" value="ECO:0007669"/>
    <property type="project" value="UniProtKB-UniRule"/>
</dbReference>
<dbReference type="CDD" id="cd00473">
    <property type="entry name" value="bS6"/>
    <property type="match status" value="1"/>
</dbReference>
<dbReference type="Gene3D" id="3.30.70.60">
    <property type="match status" value="2"/>
</dbReference>
<dbReference type="HAMAP" id="MF_00360">
    <property type="entry name" value="Ribosomal_bS6"/>
    <property type="match status" value="1"/>
</dbReference>
<dbReference type="InterPro" id="IPR000529">
    <property type="entry name" value="Ribosomal_bS6"/>
</dbReference>
<dbReference type="InterPro" id="IPR020815">
    <property type="entry name" value="Ribosomal_bS6_CS"/>
</dbReference>
<dbReference type="InterPro" id="IPR035980">
    <property type="entry name" value="Ribosomal_bS6_sf"/>
</dbReference>
<dbReference type="InterPro" id="IPR020814">
    <property type="entry name" value="Ribosomal_S6_plastid/chlpt"/>
</dbReference>
<dbReference type="InterPro" id="IPR014717">
    <property type="entry name" value="Transl_elong_EF1B/ribsomal_bS6"/>
</dbReference>
<dbReference type="NCBIfam" id="TIGR00166">
    <property type="entry name" value="S6"/>
    <property type="match status" value="1"/>
</dbReference>
<dbReference type="PANTHER" id="PTHR21011">
    <property type="entry name" value="MITOCHONDRIAL 28S RIBOSOMAL PROTEIN S6"/>
    <property type="match status" value="1"/>
</dbReference>
<dbReference type="PANTHER" id="PTHR21011:SF1">
    <property type="entry name" value="SMALL RIBOSOMAL SUBUNIT PROTEIN BS6M"/>
    <property type="match status" value="1"/>
</dbReference>
<dbReference type="Pfam" id="PF01250">
    <property type="entry name" value="Ribosomal_S6"/>
    <property type="match status" value="1"/>
</dbReference>
<dbReference type="SUPFAM" id="SSF54995">
    <property type="entry name" value="Ribosomal protein S6"/>
    <property type="match status" value="1"/>
</dbReference>
<dbReference type="PROSITE" id="PS01048">
    <property type="entry name" value="RIBOSOMAL_S6"/>
    <property type="match status" value="1"/>
</dbReference>
<accession>P62666</accession>
<organism>
    <name type="scientific">Thermus thermophilus (strain ATCC BAA-163 / DSM 7039 / HB27)</name>
    <dbReference type="NCBI Taxonomy" id="262724"/>
    <lineage>
        <taxon>Bacteria</taxon>
        <taxon>Thermotogati</taxon>
        <taxon>Deinococcota</taxon>
        <taxon>Deinococci</taxon>
        <taxon>Thermales</taxon>
        <taxon>Thermaceae</taxon>
        <taxon>Thermus</taxon>
    </lineage>
</organism>
<proteinExistence type="evidence at protein level"/>
<comment type="function">
    <text evidence="1">Located on the outer edge of the platform on the body of the 30S subunit.</text>
</comment>
<comment type="subunit">
    <text evidence="1">Part of the 30S ribosomal subunit. Forms a tight heterodimer with protein bS18 (By similarity).</text>
</comment>
<comment type="similarity">
    <text evidence="2">Belongs to the bacterial ribosomal protein bS6 family.</text>
</comment>
<keyword id="KW-0002">3D-structure</keyword>
<keyword id="KW-0687">Ribonucleoprotein</keyword>
<keyword id="KW-0689">Ribosomal protein</keyword>
<keyword id="KW-0694">RNA-binding</keyword>
<keyword id="KW-0699">rRNA-binding</keyword>
<protein>
    <recommendedName>
        <fullName evidence="2">Small ribosomal subunit protein bS6</fullName>
    </recommendedName>
    <alternativeName>
        <fullName>30S ribosomal protein S6</fullName>
    </alternativeName>
</protein>
<reference key="1">
    <citation type="journal article" date="2004" name="Nat. Biotechnol.">
        <title>The genome sequence of the extreme thermophile Thermus thermophilus.</title>
        <authorList>
            <person name="Henne A."/>
            <person name="Brueggemann H."/>
            <person name="Raasch C."/>
            <person name="Wiezer A."/>
            <person name="Hartsch T."/>
            <person name="Liesegang H."/>
            <person name="Johann A."/>
            <person name="Lienard T."/>
            <person name="Gohl O."/>
            <person name="Martinez-Arias R."/>
            <person name="Jacobi C."/>
            <person name="Starkuviene V."/>
            <person name="Schlenczeck S."/>
            <person name="Dencker S."/>
            <person name="Huber R."/>
            <person name="Klenk H.-P."/>
            <person name="Kramer W."/>
            <person name="Merkl R."/>
            <person name="Gottschalk G."/>
            <person name="Fritz H.-J."/>
        </authorList>
    </citation>
    <scope>NUCLEOTIDE SEQUENCE [LARGE SCALE GENOMIC DNA]</scope>
    <source>
        <strain>ATCC BAA-163 / DSM 7039 / HB27</strain>
    </source>
</reference>
<feature type="chain" id="PRO_0000176862" description="Small ribosomal subunit protein bS6">
    <location>
        <begin position="1"/>
        <end position="101"/>
    </location>
</feature>
<feature type="strand" evidence="4">
    <location>
        <begin position="2"/>
        <end position="10"/>
    </location>
</feature>
<feature type="strand" evidence="4">
    <location>
        <begin position="12"/>
        <end position="14"/>
    </location>
</feature>
<feature type="helix" evidence="4">
    <location>
        <begin position="16"/>
        <end position="32"/>
    </location>
</feature>
<feature type="strand" evidence="3">
    <location>
        <begin position="36"/>
        <end position="40"/>
    </location>
</feature>
<feature type="strand" evidence="4">
    <location>
        <begin position="47"/>
        <end position="52"/>
    </location>
</feature>
<feature type="strand" evidence="4">
    <location>
        <begin position="55"/>
        <end position="57"/>
    </location>
</feature>
<feature type="strand" evidence="4">
    <location>
        <begin position="59"/>
        <end position="62"/>
    </location>
</feature>
<feature type="strand" evidence="4">
    <location>
        <begin position="65"/>
        <end position="67"/>
    </location>
</feature>
<feature type="helix" evidence="4">
    <location>
        <begin position="69"/>
        <end position="71"/>
    </location>
</feature>
<feature type="helix" evidence="4">
    <location>
        <begin position="72"/>
        <end position="80"/>
    </location>
</feature>
<feature type="strand" evidence="5">
    <location>
        <begin position="82"/>
        <end position="84"/>
    </location>
</feature>
<feature type="strand" evidence="4">
    <location>
        <begin position="85"/>
        <end position="92"/>
    </location>
</feature>